<sequence length="460" mass="52247">MPRALSIKFDNTYMDLYDELPESKLLYDEEFSYLLDAVRQNGVCVVDFLTLTPKELARLIQRSINEVFRFQQLLVHEYNEKYLEICEKNSISPDNGPECFTTADVAMDELLGGGIFTHGITEIFGESSTGKSQLLMQLALSVQLSEPAGGLGGKCVYITTEGDLPTQRLESMLSSRPAYEKLGITQSNIFTVSCNDLINQEHIINVQLPILLERSKGSIKLVIIDSISHHLRVELQNKSFRESQENKNYLDRMAEKLQILAHDYSLSVVVANQVGDKPLANSPVAHRTYVTDYDYQLGWLVGWKNSTILYRQMNSLLGASSNNDEILSDDEDYMLIERVMSTVNDRNYDFFSKKKPPIIENKTVERNSSSPISRQSKKRKFDYRVPNLGLTWSNHVSTRILLQKSFKASTIIQRGEAHLYKGGDSASFWQVKRTMKVVYSTFAKPGQIAYQITKRGIETA</sequence>
<organism>
    <name type="scientific">Saccharomyces cerevisiae (strain ATCC 204508 / S288c)</name>
    <name type="common">Baker's yeast</name>
    <dbReference type="NCBI Taxonomy" id="559292"/>
    <lineage>
        <taxon>Eukaryota</taxon>
        <taxon>Fungi</taxon>
        <taxon>Dikarya</taxon>
        <taxon>Ascomycota</taxon>
        <taxon>Saccharomycotina</taxon>
        <taxon>Saccharomycetes</taxon>
        <taxon>Saccharomycetales</taxon>
        <taxon>Saccharomycetaceae</taxon>
        <taxon>Saccharomyces</taxon>
    </lineage>
</organism>
<name>RAD57_YEAST</name>
<feature type="chain" id="PRO_0000122956" description="DNA repair protein RAD57">
    <location>
        <begin position="1"/>
        <end position="460"/>
    </location>
</feature>
<feature type="binding site" evidence="1">
    <location>
        <begin position="125"/>
        <end position="132"/>
    </location>
    <ligand>
        <name>ATP</name>
        <dbReference type="ChEBI" id="CHEBI:30616"/>
    </ligand>
</feature>
<comment type="function">
    <text>Participates in the repair of X-ray-induced damage to DNA and in meiosis. It may act in part by stabilizing a repair complex of other RAD genes.</text>
</comment>
<comment type="interaction">
    <interactant intactId="EBI-14744">
        <id>P25301</id>
    </interactant>
    <interactant intactId="EBI-30044">
        <id>Q06032</id>
        <label>CST9</label>
    </interactant>
    <organismsDiffer>false</organismsDiffer>
    <experiments>2</experiments>
</comment>
<comment type="interaction">
    <interactant intactId="EBI-14744">
        <id>P25301</id>
    </interactant>
    <interactant intactId="EBI-14737">
        <id>P38953</id>
        <label>RAD55</label>
    </interactant>
    <organismsDiffer>false</organismsDiffer>
    <experiments>10</experiments>
</comment>
<comment type="subcellular location">
    <subcellularLocation>
        <location evidence="3">Nucleus</location>
    </subcellularLocation>
</comment>
<comment type="miscellaneous">
    <text evidence="2">Present with 238 molecules/cell in log phase SD medium.</text>
</comment>
<comment type="similarity">
    <text evidence="3">Belongs to the RecA family.</text>
</comment>
<dbReference type="EMBL" id="M65061">
    <property type="protein sequence ID" value="AAA34950.1"/>
    <property type="molecule type" value="Genomic_DNA"/>
</dbReference>
<dbReference type="EMBL" id="Z48008">
    <property type="protein sequence ID" value="CAA88064.1"/>
    <property type="molecule type" value="Genomic_DNA"/>
</dbReference>
<dbReference type="EMBL" id="BK006938">
    <property type="protein sequence ID" value="DAA11852.1"/>
    <property type="molecule type" value="Genomic_DNA"/>
</dbReference>
<dbReference type="PIR" id="JQ1275">
    <property type="entry name" value="JQ1275"/>
</dbReference>
<dbReference type="RefSeq" id="NP_010287.1">
    <property type="nucleotide sequence ID" value="NM_001180312.1"/>
</dbReference>
<dbReference type="SMR" id="P25301"/>
<dbReference type="BioGRID" id="32057">
    <property type="interactions" value="273"/>
</dbReference>
<dbReference type="ComplexPortal" id="CPX-3139">
    <property type="entry name" value="RAD55-RAD57 complex"/>
</dbReference>
<dbReference type="DIP" id="DIP-4774N"/>
<dbReference type="FunCoup" id="P25301">
    <property type="interactions" value="66"/>
</dbReference>
<dbReference type="IntAct" id="P25301">
    <property type="interactions" value="18"/>
</dbReference>
<dbReference type="STRING" id="4932.YDR004W"/>
<dbReference type="iPTMnet" id="P25301"/>
<dbReference type="PaxDb" id="4932-YDR004W"/>
<dbReference type="PeptideAtlas" id="P25301"/>
<dbReference type="EnsemblFungi" id="YDR004W_mRNA">
    <property type="protein sequence ID" value="YDR004W"/>
    <property type="gene ID" value="YDR004W"/>
</dbReference>
<dbReference type="GeneID" id="851567"/>
<dbReference type="KEGG" id="sce:YDR004W"/>
<dbReference type="AGR" id="SGD:S000002411"/>
<dbReference type="SGD" id="S000002411">
    <property type="gene designation" value="RAD57"/>
</dbReference>
<dbReference type="VEuPathDB" id="FungiDB:YDR004W"/>
<dbReference type="eggNOG" id="KOG1564">
    <property type="taxonomic scope" value="Eukaryota"/>
</dbReference>
<dbReference type="GeneTree" id="ENSGT00930000151053"/>
<dbReference type="HOGENOM" id="CLU_045144_0_0_1"/>
<dbReference type="InParanoid" id="P25301"/>
<dbReference type="OMA" id="ISHHMRV"/>
<dbReference type="OrthoDB" id="1861185at2759"/>
<dbReference type="BioCyc" id="YEAST:G3O-29626-MONOMER"/>
<dbReference type="BioGRID-ORCS" id="851567">
    <property type="hits" value="0 hits in 10 CRISPR screens"/>
</dbReference>
<dbReference type="PRO" id="PR:P25301"/>
<dbReference type="Proteomes" id="UP000002311">
    <property type="component" value="Chromosome IV"/>
</dbReference>
<dbReference type="RNAct" id="P25301">
    <property type="molecule type" value="protein"/>
</dbReference>
<dbReference type="GO" id="GO:0033065">
    <property type="term" value="C:Rad51C-XRCC3 complex"/>
    <property type="evidence" value="ECO:0000314"/>
    <property type="project" value="SGD"/>
</dbReference>
<dbReference type="GO" id="GO:0005524">
    <property type="term" value="F:ATP binding"/>
    <property type="evidence" value="ECO:0007669"/>
    <property type="project" value="UniProtKB-KW"/>
</dbReference>
<dbReference type="GO" id="GO:0016887">
    <property type="term" value="F:ATP hydrolysis activity"/>
    <property type="evidence" value="ECO:0007669"/>
    <property type="project" value="InterPro"/>
</dbReference>
<dbReference type="GO" id="GO:0008094">
    <property type="term" value="F:ATP-dependent activity, acting on DNA"/>
    <property type="evidence" value="ECO:0000250"/>
    <property type="project" value="SGD"/>
</dbReference>
<dbReference type="GO" id="GO:0140664">
    <property type="term" value="F:ATP-dependent DNA damage sensor activity"/>
    <property type="evidence" value="ECO:0007669"/>
    <property type="project" value="InterPro"/>
</dbReference>
<dbReference type="GO" id="GO:0000150">
    <property type="term" value="F:DNA strand exchange activity"/>
    <property type="evidence" value="ECO:0000318"/>
    <property type="project" value="GO_Central"/>
</dbReference>
<dbReference type="GO" id="GO:0003690">
    <property type="term" value="F:double-stranded DNA binding"/>
    <property type="evidence" value="ECO:0000318"/>
    <property type="project" value="GO_Central"/>
</dbReference>
<dbReference type="GO" id="GO:0003697">
    <property type="term" value="F:single-stranded DNA binding"/>
    <property type="evidence" value="ECO:0000318"/>
    <property type="project" value="GO_Central"/>
</dbReference>
<dbReference type="GO" id="GO:0000730">
    <property type="term" value="P:DNA recombinase assembly"/>
    <property type="evidence" value="ECO:0000353"/>
    <property type="project" value="SGD"/>
</dbReference>
<dbReference type="GO" id="GO:0042148">
    <property type="term" value="P:DNA strand invasion"/>
    <property type="evidence" value="ECO:0000318"/>
    <property type="project" value="GO_Central"/>
</dbReference>
<dbReference type="GO" id="GO:0006302">
    <property type="term" value="P:double-strand break repair"/>
    <property type="evidence" value="ECO:0000315"/>
    <property type="project" value="ComplexPortal"/>
</dbReference>
<dbReference type="GO" id="GO:0042275">
    <property type="term" value="P:error-free postreplication DNA repair"/>
    <property type="evidence" value="ECO:0000314"/>
    <property type="project" value="ComplexPortal"/>
</dbReference>
<dbReference type="GO" id="GO:0030491">
    <property type="term" value="P:heteroduplex formation"/>
    <property type="evidence" value="ECO:0000314"/>
    <property type="project" value="SGD"/>
</dbReference>
<dbReference type="GO" id="GO:0000707">
    <property type="term" value="P:meiotic DNA recombinase assembly"/>
    <property type="evidence" value="ECO:0000315"/>
    <property type="project" value="SGD"/>
</dbReference>
<dbReference type="GO" id="GO:0006312">
    <property type="term" value="P:mitotic recombination"/>
    <property type="evidence" value="ECO:0000318"/>
    <property type="project" value="GO_Central"/>
</dbReference>
<dbReference type="GO" id="GO:1903112">
    <property type="term" value="P:positive regulation of single-strand break repair via homologous recombination"/>
    <property type="evidence" value="ECO:0000314"/>
    <property type="project" value="ComplexPortal"/>
</dbReference>
<dbReference type="GO" id="GO:0000722">
    <property type="term" value="P:telomere maintenance via recombination"/>
    <property type="evidence" value="ECO:0000315"/>
    <property type="project" value="SGD"/>
</dbReference>
<dbReference type="CDD" id="cd19491">
    <property type="entry name" value="XRCC3"/>
    <property type="match status" value="1"/>
</dbReference>
<dbReference type="FunFam" id="3.40.50.300:FF:002837">
    <property type="entry name" value="Rad57p"/>
    <property type="match status" value="1"/>
</dbReference>
<dbReference type="Gene3D" id="3.40.50.300">
    <property type="entry name" value="P-loop containing nucleotide triphosphate hydrolases"/>
    <property type="match status" value="2"/>
</dbReference>
<dbReference type="InterPro" id="IPR003593">
    <property type="entry name" value="AAA+_ATPase"/>
</dbReference>
<dbReference type="InterPro" id="IPR013632">
    <property type="entry name" value="DNA_recomb/repair_Rad51_C"/>
</dbReference>
<dbReference type="InterPro" id="IPR027417">
    <property type="entry name" value="P-loop_NTPase"/>
</dbReference>
<dbReference type="InterPro" id="IPR020588">
    <property type="entry name" value="RecA_ATP-bd"/>
</dbReference>
<dbReference type="InterPro" id="IPR047348">
    <property type="entry name" value="XRCC3-like_C"/>
</dbReference>
<dbReference type="PANTHER" id="PTHR22942:SF66">
    <property type="entry name" value="RE19845P"/>
    <property type="match status" value="1"/>
</dbReference>
<dbReference type="PANTHER" id="PTHR22942">
    <property type="entry name" value="RECA/RAD51/RADA DNA STRAND-PAIRING FAMILY MEMBER"/>
    <property type="match status" value="1"/>
</dbReference>
<dbReference type="Pfam" id="PF08423">
    <property type="entry name" value="Rad51"/>
    <property type="match status" value="1"/>
</dbReference>
<dbReference type="SMART" id="SM00382">
    <property type="entry name" value="AAA"/>
    <property type="match status" value="1"/>
</dbReference>
<dbReference type="SUPFAM" id="SSF52540">
    <property type="entry name" value="P-loop containing nucleoside triphosphate hydrolases"/>
    <property type="match status" value="1"/>
</dbReference>
<dbReference type="PROSITE" id="PS50162">
    <property type="entry name" value="RECA_2"/>
    <property type="match status" value="1"/>
</dbReference>
<reference key="1">
    <citation type="journal article" date="1991" name="Gene">
        <title>Nucleotide sequence of the RAD57 gene of Saccharomyces cerevisiae.</title>
        <authorList>
            <person name="Kans J.A."/>
            <person name="Mortimer R.K."/>
        </authorList>
    </citation>
    <scope>NUCLEOTIDE SEQUENCE [GENOMIC DNA]</scope>
</reference>
<reference key="2">
    <citation type="journal article" date="1997" name="Nature">
        <title>The nucleotide sequence of Saccharomyces cerevisiae chromosome IV.</title>
        <authorList>
            <person name="Jacq C."/>
            <person name="Alt-Moerbe J."/>
            <person name="Andre B."/>
            <person name="Arnold W."/>
            <person name="Bahr A."/>
            <person name="Ballesta J.P.G."/>
            <person name="Bargues M."/>
            <person name="Baron L."/>
            <person name="Becker A."/>
            <person name="Biteau N."/>
            <person name="Bloecker H."/>
            <person name="Blugeon C."/>
            <person name="Boskovic J."/>
            <person name="Brandt P."/>
            <person name="Brueckner M."/>
            <person name="Buitrago M.J."/>
            <person name="Coster F."/>
            <person name="Delaveau T."/>
            <person name="del Rey F."/>
            <person name="Dujon B."/>
            <person name="Eide L.G."/>
            <person name="Garcia-Cantalejo J.M."/>
            <person name="Goffeau A."/>
            <person name="Gomez-Peris A."/>
            <person name="Granotier C."/>
            <person name="Hanemann V."/>
            <person name="Hankeln T."/>
            <person name="Hoheisel J.D."/>
            <person name="Jaeger W."/>
            <person name="Jimenez A."/>
            <person name="Jonniaux J.-L."/>
            <person name="Kraemer C."/>
            <person name="Kuester H."/>
            <person name="Laamanen P."/>
            <person name="Legros Y."/>
            <person name="Louis E.J."/>
            <person name="Moeller-Rieker S."/>
            <person name="Monnet A."/>
            <person name="Moro M."/>
            <person name="Mueller-Auer S."/>
            <person name="Nussbaumer B."/>
            <person name="Paricio N."/>
            <person name="Paulin L."/>
            <person name="Perea J."/>
            <person name="Perez-Alonso M."/>
            <person name="Perez-Ortin J.E."/>
            <person name="Pohl T.M."/>
            <person name="Prydz H."/>
            <person name="Purnelle B."/>
            <person name="Rasmussen S.W."/>
            <person name="Remacha M.A."/>
            <person name="Revuelta J.L."/>
            <person name="Rieger M."/>
            <person name="Salom D."/>
            <person name="Saluz H.P."/>
            <person name="Saiz J.E."/>
            <person name="Saren A.-M."/>
            <person name="Schaefer M."/>
            <person name="Scharfe M."/>
            <person name="Schmidt E.R."/>
            <person name="Schneider C."/>
            <person name="Scholler P."/>
            <person name="Schwarz S."/>
            <person name="Soler-Mira A."/>
            <person name="Urrestarazu L.A."/>
            <person name="Verhasselt P."/>
            <person name="Vissers S."/>
            <person name="Voet M."/>
            <person name="Volckaert G."/>
            <person name="Wagner G."/>
            <person name="Wambutt R."/>
            <person name="Wedler E."/>
            <person name="Wedler H."/>
            <person name="Woelfl S."/>
            <person name="Harris D.E."/>
            <person name="Bowman S."/>
            <person name="Brown D."/>
            <person name="Churcher C.M."/>
            <person name="Connor R."/>
            <person name="Dedman K."/>
            <person name="Gentles S."/>
            <person name="Hamlin N."/>
            <person name="Hunt S."/>
            <person name="Jones L."/>
            <person name="McDonald S."/>
            <person name="Murphy L.D."/>
            <person name="Niblett D."/>
            <person name="Odell C."/>
            <person name="Oliver K."/>
            <person name="Rajandream M.A."/>
            <person name="Richards C."/>
            <person name="Shore L."/>
            <person name="Walsh S.V."/>
            <person name="Barrell B.G."/>
            <person name="Dietrich F.S."/>
            <person name="Mulligan J.T."/>
            <person name="Allen E."/>
            <person name="Araujo R."/>
            <person name="Aviles E."/>
            <person name="Berno A."/>
            <person name="Carpenter J."/>
            <person name="Chen E."/>
            <person name="Cherry J.M."/>
            <person name="Chung E."/>
            <person name="Duncan M."/>
            <person name="Hunicke-Smith S."/>
            <person name="Hyman R.W."/>
            <person name="Komp C."/>
            <person name="Lashkari D."/>
            <person name="Lew H."/>
            <person name="Lin D."/>
            <person name="Mosedale D."/>
            <person name="Nakahara K."/>
            <person name="Namath A."/>
            <person name="Oefner P."/>
            <person name="Oh C."/>
            <person name="Petel F.X."/>
            <person name="Roberts D."/>
            <person name="Schramm S."/>
            <person name="Schroeder M."/>
            <person name="Shogren T."/>
            <person name="Shroff N."/>
            <person name="Winant A."/>
            <person name="Yelton M.A."/>
            <person name="Botstein D."/>
            <person name="Davis R.W."/>
            <person name="Johnston M."/>
            <person name="Andrews S."/>
            <person name="Brinkman R."/>
            <person name="Cooper J."/>
            <person name="Ding H."/>
            <person name="Du Z."/>
            <person name="Favello A."/>
            <person name="Fulton L."/>
            <person name="Gattung S."/>
            <person name="Greco T."/>
            <person name="Hallsworth K."/>
            <person name="Hawkins J."/>
            <person name="Hillier L.W."/>
            <person name="Jier M."/>
            <person name="Johnson D."/>
            <person name="Johnston L."/>
            <person name="Kirsten J."/>
            <person name="Kucaba T."/>
            <person name="Langston Y."/>
            <person name="Latreille P."/>
            <person name="Le T."/>
            <person name="Mardis E."/>
            <person name="Menezes S."/>
            <person name="Miller N."/>
            <person name="Nhan M."/>
            <person name="Pauley A."/>
            <person name="Peluso D."/>
            <person name="Rifkin L."/>
            <person name="Riles L."/>
            <person name="Taich A."/>
            <person name="Trevaskis E."/>
            <person name="Vignati D."/>
            <person name="Wilcox L."/>
            <person name="Wohldman P."/>
            <person name="Vaudin M."/>
            <person name="Wilson R."/>
            <person name="Waterston R."/>
            <person name="Albermann K."/>
            <person name="Hani J."/>
            <person name="Heumann K."/>
            <person name="Kleine K."/>
            <person name="Mewes H.-W."/>
            <person name="Zollner A."/>
            <person name="Zaccaria P."/>
        </authorList>
    </citation>
    <scope>NUCLEOTIDE SEQUENCE [LARGE SCALE GENOMIC DNA]</scope>
    <source>
        <strain>ATCC 204508 / S288c</strain>
    </source>
</reference>
<reference key="3">
    <citation type="journal article" date="2014" name="G3 (Bethesda)">
        <title>The reference genome sequence of Saccharomyces cerevisiae: Then and now.</title>
        <authorList>
            <person name="Engel S.R."/>
            <person name="Dietrich F.S."/>
            <person name="Fisk D.G."/>
            <person name="Binkley G."/>
            <person name="Balakrishnan R."/>
            <person name="Costanzo M.C."/>
            <person name="Dwight S.S."/>
            <person name="Hitz B.C."/>
            <person name="Karra K."/>
            <person name="Nash R.S."/>
            <person name="Weng S."/>
            <person name="Wong E.D."/>
            <person name="Lloyd P."/>
            <person name="Skrzypek M.S."/>
            <person name="Miyasato S.R."/>
            <person name="Simison M."/>
            <person name="Cherry J.M."/>
        </authorList>
    </citation>
    <scope>GENOME REANNOTATION</scope>
    <source>
        <strain>ATCC 204508 / S288c</strain>
    </source>
</reference>
<reference key="4">
    <citation type="journal article" date="2003" name="Nature">
        <title>Global analysis of protein expression in yeast.</title>
        <authorList>
            <person name="Ghaemmaghami S."/>
            <person name="Huh W.-K."/>
            <person name="Bower K."/>
            <person name="Howson R.W."/>
            <person name="Belle A."/>
            <person name="Dephoure N."/>
            <person name="O'Shea E.K."/>
            <person name="Weissman J.S."/>
        </authorList>
    </citation>
    <scope>LEVEL OF PROTEIN EXPRESSION [LARGE SCALE ANALYSIS]</scope>
</reference>
<accession>P25301</accession>
<accession>D6VRZ2</accession>
<protein>
    <recommendedName>
        <fullName>DNA repair protein RAD57</fullName>
    </recommendedName>
</protein>
<proteinExistence type="evidence at protein level"/>
<keyword id="KW-0067">ATP-binding</keyword>
<keyword id="KW-0227">DNA damage</keyword>
<keyword id="KW-0234">DNA repair</keyword>
<keyword id="KW-0469">Meiosis</keyword>
<keyword id="KW-0547">Nucleotide-binding</keyword>
<keyword id="KW-0539">Nucleus</keyword>
<keyword id="KW-1185">Reference proteome</keyword>
<gene>
    <name type="primary">RAD57</name>
    <name type="ordered locus">YDR004W</name>
    <name type="ORF">YD8119.10</name>
</gene>
<evidence type="ECO:0000255" key="1"/>
<evidence type="ECO:0000269" key="2">
    <source>
    </source>
</evidence>
<evidence type="ECO:0000305" key="3"/>